<gene>
    <name type="primary">Defb29</name>
</gene>
<keyword id="KW-0044">Antibiotic</keyword>
<keyword id="KW-0929">Antimicrobial</keyword>
<keyword id="KW-0211">Defensin</keyword>
<keyword id="KW-1015">Disulfide bond</keyword>
<keyword id="KW-1185">Reference proteome</keyword>
<keyword id="KW-0964">Secreted</keyword>
<keyword id="KW-0732">Signal</keyword>
<organism>
    <name type="scientific">Mus musculus</name>
    <name type="common">Mouse</name>
    <dbReference type="NCBI Taxonomy" id="10090"/>
    <lineage>
        <taxon>Eukaryota</taxon>
        <taxon>Metazoa</taxon>
        <taxon>Chordata</taxon>
        <taxon>Craniata</taxon>
        <taxon>Vertebrata</taxon>
        <taxon>Euteleostomi</taxon>
        <taxon>Mammalia</taxon>
        <taxon>Eutheria</taxon>
        <taxon>Euarchontoglires</taxon>
        <taxon>Glires</taxon>
        <taxon>Rodentia</taxon>
        <taxon>Myomorpha</taxon>
        <taxon>Muroidea</taxon>
        <taxon>Muridae</taxon>
        <taxon>Murinae</taxon>
        <taxon>Mus</taxon>
        <taxon>Mus</taxon>
    </lineage>
</organism>
<dbReference type="EMBL" id="AF515626">
    <property type="protein sequence ID" value="AAN77095.1"/>
    <property type="molecule type" value="mRNA"/>
</dbReference>
<dbReference type="EMBL" id="AK002707">
    <property type="protein sequence ID" value="BAC25003.1"/>
    <property type="molecule type" value="mRNA"/>
</dbReference>
<dbReference type="CCDS" id="CCDS38276.1"/>
<dbReference type="RefSeq" id="NP_001001444.1">
    <property type="nucleotide sequence ID" value="NM_001001444.2"/>
</dbReference>
<dbReference type="SMR" id="Q8BGW9"/>
<dbReference type="FunCoup" id="Q8BGW9">
    <property type="interactions" value="1"/>
</dbReference>
<dbReference type="STRING" id="10090.ENSMUSP00000052589"/>
<dbReference type="PhosphoSitePlus" id="Q8BGW9"/>
<dbReference type="PaxDb" id="10090-ENSMUSP00000052589"/>
<dbReference type="PeptideAtlas" id="Q8BGW9"/>
<dbReference type="ProteomicsDB" id="279522"/>
<dbReference type="Antibodypedia" id="49711">
    <property type="antibodies" value="9 antibodies from 6 providers"/>
</dbReference>
<dbReference type="Ensembl" id="ENSMUST00000060598.4">
    <property type="protein sequence ID" value="ENSMUSP00000052589.3"/>
    <property type="gene ID" value="ENSMUSG00000044249.4"/>
</dbReference>
<dbReference type="GeneID" id="75400"/>
<dbReference type="KEGG" id="mmu:75400"/>
<dbReference type="UCSC" id="uc008nfq.1">
    <property type="organism name" value="mouse"/>
</dbReference>
<dbReference type="AGR" id="MGI:1922650"/>
<dbReference type="CTD" id="75400"/>
<dbReference type="MGI" id="MGI:1922650">
    <property type="gene designation" value="Defb29"/>
</dbReference>
<dbReference type="VEuPathDB" id="HostDB:ENSMUSG00000044249"/>
<dbReference type="eggNOG" id="ENOG502TF8H">
    <property type="taxonomic scope" value="Eukaryota"/>
</dbReference>
<dbReference type="GeneTree" id="ENSGT00390000001502"/>
<dbReference type="HOGENOM" id="CLU_2482789_0_0_1"/>
<dbReference type="InParanoid" id="Q8BGW9"/>
<dbReference type="OMA" id="PCLMTIV"/>
<dbReference type="OrthoDB" id="9836790at2759"/>
<dbReference type="PhylomeDB" id="Q8BGW9"/>
<dbReference type="BioGRID-ORCS" id="75400">
    <property type="hits" value="1 hit in 76 CRISPR screens"/>
</dbReference>
<dbReference type="ChiTaRS" id="Defb29">
    <property type="organism name" value="mouse"/>
</dbReference>
<dbReference type="PRO" id="PR:Q8BGW9"/>
<dbReference type="Proteomes" id="UP000000589">
    <property type="component" value="Chromosome 2"/>
</dbReference>
<dbReference type="RNAct" id="Q8BGW9">
    <property type="molecule type" value="protein"/>
</dbReference>
<dbReference type="Bgee" id="ENSMUSG00000044249">
    <property type="expression patterns" value="Expressed in right kidney and 22 other cell types or tissues"/>
</dbReference>
<dbReference type="ExpressionAtlas" id="Q8BGW9">
    <property type="expression patterns" value="baseline and differential"/>
</dbReference>
<dbReference type="GO" id="GO:0005576">
    <property type="term" value="C:extracellular region"/>
    <property type="evidence" value="ECO:0007669"/>
    <property type="project" value="UniProtKB-SubCell"/>
</dbReference>
<dbReference type="GO" id="GO:0042742">
    <property type="term" value="P:defense response to bacterium"/>
    <property type="evidence" value="ECO:0007669"/>
    <property type="project" value="UniProtKB-KW"/>
</dbReference>
<dbReference type="GO" id="GO:0045087">
    <property type="term" value="P:innate immune response"/>
    <property type="evidence" value="ECO:0007669"/>
    <property type="project" value="InterPro"/>
</dbReference>
<dbReference type="InterPro" id="IPR025933">
    <property type="entry name" value="Beta_defensin_dom"/>
</dbReference>
<dbReference type="Pfam" id="PF13841">
    <property type="entry name" value="Defensin_beta_2"/>
    <property type="match status" value="1"/>
</dbReference>
<sequence length="78" mass="9067">MPVTKSYFMTVVVVLILVDETTGGLFGFRSSKRQEPWIACELYQGLCRNACQKYEIQYLSCPKTRKCCLKYPRKITSF</sequence>
<evidence type="ECO:0000250" key="1"/>
<evidence type="ECO:0000255" key="2"/>
<evidence type="ECO:0000269" key="3">
    <source>
    </source>
</evidence>
<evidence type="ECO:0000305" key="4"/>
<protein>
    <recommendedName>
        <fullName>Beta-defensin 29</fullName>
        <shortName>BD-29</shortName>
        <shortName>mBD-29</shortName>
    </recommendedName>
    <alternativeName>
        <fullName>Defensin, beta 29</fullName>
    </alternativeName>
</protein>
<comment type="function">
    <text evidence="1">Has antibacterial activity.</text>
</comment>
<comment type="subcellular location">
    <subcellularLocation>
        <location evidence="1">Secreted</location>
    </subcellularLocation>
</comment>
<comment type="tissue specificity">
    <text evidence="3">Highly expressed in the cauda epididymis.</text>
</comment>
<comment type="similarity">
    <text evidence="4">Belongs to the beta-defensin family.</text>
</comment>
<accession>Q8BGW9</accession>
<reference key="1">
    <citation type="submission" date="2002-05" db="EMBL/GenBank/DDBJ databases">
        <title>Immature dendritic cells recruited by defensins contribute to neoangiogenesis and ovarian cancer progression in the presence of VEGF.</title>
        <authorList>
            <person name="Conejo-Garcia J.R."/>
            <person name="Benencia F."/>
            <person name="Zhang L."/>
            <person name="Courreges C."/>
            <person name="Khang E."/>
            <person name="Mohamed-Hadley A."/>
            <person name="Gray H."/>
            <person name="Coukos G."/>
        </authorList>
    </citation>
    <scope>NUCLEOTIDE SEQUENCE [MRNA]</scope>
    <source>
        <strain>C57BL/6J</strain>
        <tissue>Kidney</tissue>
    </source>
</reference>
<reference key="2">
    <citation type="journal article" date="2005" name="Science">
        <title>The transcriptional landscape of the mammalian genome.</title>
        <authorList>
            <person name="Carninci P."/>
            <person name="Kasukawa T."/>
            <person name="Katayama S."/>
            <person name="Gough J."/>
            <person name="Frith M.C."/>
            <person name="Maeda N."/>
            <person name="Oyama R."/>
            <person name="Ravasi T."/>
            <person name="Lenhard B."/>
            <person name="Wells C."/>
            <person name="Kodzius R."/>
            <person name="Shimokawa K."/>
            <person name="Bajic V.B."/>
            <person name="Brenner S.E."/>
            <person name="Batalov S."/>
            <person name="Forrest A.R."/>
            <person name="Zavolan M."/>
            <person name="Davis M.J."/>
            <person name="Wilming L.G."/>
            <person name="Aidinis V."/>
            <person name="Allen J.E."/>
            <person name="Ambesi-Impiombato A."/>
            <person name="Apweiler R."/>
            <person name="Aturaliya R.N."/>
            <person name="Bailey T.L."/>
            <person name="Bansal M."/>
            <person name="Baxter L."/>
            <person name="Beisel K.W."/>
            <person name="Bersano T."/>
            <person name="Bono H."/>
            <person name="Chalk A.M."/>
            <person name="Chiu K.P."/>
            <person name="Choudhary V."/>
            <person name="Christoffels A."/>
            <person name="Clutterbuck D.R."/>
            <person name="Crowe M.L."/>
            <person name="Dalla E."/>
            <person name="Dalrymple B.P."/>
            <person name="de Bono B."/>
            <person name="Della Gatta G."/>
            <person name="di Bernardo D."/>
            <person name="Down T."/>
            <person name="Engstrom P."/>
            <person name="Fagiolini M."/>
            <person name="Faulkner G."/>
            <person name="Fletcher C.F."/>
            <person name="Fukushima T."/>
            <person name="Furuno M."/>
            <person name="Futaki S."/>
            <person name="Gariboldi M."/>
            <person name="Georgii-Hemming P."/>
            <person name="Gingeras T.R."/>
            <person name="Gojobori T."/>
            <person name="Green R.E."/>
            <person name="Gustincich S."/>
            <person name="Harbers M."/>
            <person name="Hayashi Y."/>
            <person name="Hensch T.K."/>
            <person name="Hirokawa N."/>
            <person name="Hill D."/>
            <person name="Huminiecki L."/>
            <person name="Iacono M."/>
            <person name="Ikeo K."/>
            <person name="Iwama A."/>
            <person name="Ishikawa T."/>
            <person name="Jakt M."/>
            <person name="Kanapin A."/>
            <person name="Katoh M."/>
            <person name="Kawasawa Y."/>
            <person name="Kelso J."/>
            <person name="Kitamura H."/>
            <person name="Kitano H."/>
            <person name="Kollias G."/>
            <person name="Krishnan S.P."/>
            <person name="Kruger A."/>
            <person name="Kummerfeld S.K."/>
            <person name="Kurochkin I.V."/>
            <person name="Lareau L.F."/>
            <person name="Lazarevic D."/>
            <person name="Lipovich L."/>
            <person name="Liu J."/>
            <person name="Liuni S."/>
            <person name="McWilliam S."/>
            <person name="Madan Babu M."/>
            <person name="Madera M."/>
            <person name="Marchionni L."/>
            <person name="Matsuda H."/>
            <person name="Matsuzawa S."/>
            <person name="Miki H."/>
            <person name="Mignone F."/>
            <person name="Miyake S."/>
            <person name="Morris K."/>
            <person name="Mottagui-Tabar S."/>
            <person name="Mulder N."/>
            <person name="Nakano N."/>
            <person name="Nakauchi H."/>
            <person name="Ng P."/>
            <person name="Nilsson R."/>
            <person name="Nishiguchi S."/>
            <person name="Nishikawa S."/>
            <person name="Nori F."/>
            <person name="Ohara O."/>
            <person name="Okazaki Y."/>
            <person name="Orlando V."/>
            <person name="Pang K.C."/>
            <person name="Pavan W.J."/>
            <person name="Pavesi G."/>
            <person name="Pesole G."/>
            <person name="Petrovsky N."/>
            <person name="Piazza S."/>
            <person name="Reed J."/>
            <person name="Reid J.F."/>
            <person name="Ring B.Z."/>
            <person name="Ringwald M."/>
            <person name="Rost B."/>
            <person name="Ruan Y."/>
            <person name="Salzberg S.L."/>
            <person name="Sandelin A."/>
            <person name="Schneider C."/>
            <person name="Schoenbach C."/>
            <person name="Sekiguchi K."/>
            <person name="Semple C.A."/>
            <person name="Seno S."/>
            <person name="Sessa L."/>
            <person name="Sheng Y."/>
            <person name="Shibata Y."/>
            <person name="Shimada H."/>
            <person name="Shimada K."/>
            <person name="Silva D."/>
            <person name="Sinclair B."/>
            <person name="Sperling S."/>
            <person name="Stupka E."/>
            <person name="Sugiura K."/>
            <person name="Sultana R."/>
            <person name="Takenaka Y."/>
            <person name="Taki K."/>
            <person name="Tammoja K."/>
            <person name="Tan S.L."/>
            <person name="Tang S."/>
            <person name="Taylor M.S."/>
            <person name="Tegner J."/>
            <person name="Teichmann S.A."/>
            <person name="Ueda H.R."/>
            <person name="van Nimwegen E."/>
            <person name="Verardo R."/>
            <person name="Wei C.L."/>
            <person name="Yagi K."/>
            <person name="Yamanishi H."/>
            <person name="Zabarovsky E."/>
            <person name="Zhu S."/>
            <person name="Zimmer A."/>
            <person name="Hide W."/>
            <person name="Bult C."/>
            <person name="Grimmond S.M."/>
            <person name="Teasdale R.D."/>
            <person name="Liu E.T."/>
            <person name="Brusic V."/>
            <person name="Quackenbush J."/>
            <person name="Wahlestedt C."/>
            <person name="Mattick J.S."/>
            <person name="Hume D.A."/>
            <person name="Kai C."/>
            <person name="Sasaki D."/>
            <person name="Tomaru Y."/>
            <person name="Fukuda S."/>
            <person name="Kanamori-Katayama M."/>
            <person name="Suzuki M."/>
            <person name="Aoki J."/>
            <person name="Arakawa T."/>
            <person name="Iida J."/>
            <person name="Imamura K."/>
            <person name="Itoh M."/>
            <person name="Kato T."/>
            <person name="Kawaji H."/>
            <person name="Kawagashira N."/>
            <person name="Kawashima T."/>
            <person name="Kojima M."/>
            <person name="Kondo S."/>
            <person name="Konno H."/>
            <person name="Nakano K."/>
            <person name="Ninomiya N."/>
            <person name="Nishio T."/>
            <person name="Okada M."/>
            <person name="Plessy C."/>
            <person name="Shibata K."/>
            <person name="Shiraki T."/>
            <person name="Suzuki S."/>
            <person name="Tagami M."/>
            <person name="Waki K."/>
            <person name="Watahiki A."/>
            <person name="Okamura-Oho Y."/>
            <person name="Suzuki H."/>
            <person name="Kawai J."/>
            <person name="Hayashizaki Y."/>
        </authorList>
    </citation>
    <scope>NUCLEOTIDE SEQUENCE [LARGE SCALE MRNA]</scope>
    <source>
        <strain>C57BL/6J</strain>
        <tissue>Kidney</tissue>
    </source>
</reference>
<reference key="3">
    <citation type="journal article" date="2014" name="J. Cell. Physiol.">
        <title>A role for the chemokine receptor CCR6 in mammalian sperm motility and chemotaxis.</title>
        <authorList>
            <person name="Caballero-Campo P."/>
            <person name="Buffone M.G."/>
            <person name="Benencia F."/>
            <person name="Conejo-Garcia J.R."/>
            <person name="Rinaudo P.F."/>
            <person name="Gerton G.L."/>
        </authorList>
    </citation>
    <scope>TISSUE SPECIFICITY</scope>
</reference>
<proteinExistence type="evidence at transcript level"/>
<name>DFB29_MOUSE</name>
<feature type="signal peptide" evidence="2">
    <location>
        <begin position="1"/>
        <end position="23"/>
    </location>
</feature>
<feature type="chain" id="PRO_0000006945" description="Beta-defensin 29">
    <location>
        <begin position="24"/>
        <end position="78"/>
    </location>
</feature>
<feature type="disulfide bond" evidence="1">
    <location>
        <begin position="40"/>
        <end position="67"/>
    </location>
</feature>
<feature type="disulfide bond" evidence="1">
    <location>
        <begin position="47"/>
        <end position="61"/>
    </location>
</feature>
<feature type="disulfide bond" evidence="1">
    <location>
        <begin position="51"/>
        <end position="68"/>
    </location>
</feature>